<evidence type="ECO:0000255" key="1">
    <source>
        <dbReference type="HAMAP-Rule" id="MF_01719"/>
    </source>
</evidence>
<name>METN2_STAAR</name>
<organism>
    <name type="scientific">Staphylococcus aureus (strain MRSA252)</name>
    <dbReference type="NCBI Taxonomy" id="282458"/>
    <lineage>
        <taxon>Bacteria</taxon>
        <taxon>Bacillati</taxon>
        <taxon>Bacillota</taxon>
        <taxon>Bacilli</taxon>
        <taxon>Bacillales</taxon>
        <taxon>Staphylococcaceae</taxon>
        <taxon>Staphylococcus</taxon>
    </lineage>
</organism>
<dbReference type="EC" id="7.4.2.11" evidence="1"/>
<dbReference type="EMBL" id="BX571856">
    <property type="protein sequence ID" value="CAG39877.1"/>
    <property type="molecule type" value="Genomic_DNA"/>
</dbReference>
<dbReference type="RefSeq" id="WP_000571209.1">
    <property type="nucleotide sequence ID" value="NC_002952.2"/>
</dbReference>
<dbReference type="SMR" id="Q6GIH9"/>
<dbReference type="KEGG" id="sar:SAR0870"/>
<dbReference type="HOGENOM" id="CLU_000604_1_3_9"/>
<dbReference type="Proteomes" id="UP000000596">
    <property type="component" value="Chromosome"/>
</dbReference>
<dbReference type="GO" id="GO:0005886">
    <property type="term" value="C:plasma membrane"/>
    <property type="evidence" value="ECO:0007669"/>
    <property type="project" value="UniProtKB-SubCell"/>
</dbReference>
<dbReference type="GO" id="GO:0033232">
    <property type="term" value="F:ABC-type D-methionine transporter activity"/>
    <property type="evidence" value="ECO:0007669"/>
    <property type="project" value="UniProtKB-EC"/>
</dbReference>
<dbReference type="GO" id="GO:0005524">
    <property type="term" value="F:ATP binding"/>
    <property type="evidence" value="ECO:0007669"/>
    <property type="project" value="UniProtKB-KW"/>
</dbReference>
<dbReference type="GO" id="GO:0016887">
    <property type="term" value="F:ATP hydrolysis activity"/>
    <property type="evidence" value="ECO:0007669"/>
    <property type="project" value="InterPro"/>
</dbReference>
<dbReference type="CDD" id="cd03258">
    <property type="entry name" value="ABC_MetN_methionine_transporter"/>
    <property type="match status" value="1"/>
</dbReference>
<dbReference type="FunFam" id="3.40.50.300:FF:000056">
    <property type="entry name" value="Cell division ATP-binding protein FtsE"/>
    <property type="match status" value="1"/>
</dbReference>
<dbReference type="Gene3D" id="3.30.70.260">
    <property type="match status" value="1"/>
</dbReference>
<dbReference type="Gene3D" id="3.40.50.300">
    <property type="entry name" value="P-loop containing nucleotide triphosphate hydrolases"/>
    <property type="match status" value="1"/>
</dbReference>
<dbReference type="InterPro" id="IPR003593">
    <property type="entry name" value="AAA+_ATPase"/>
</dbReference>
<dbReference type="InterPro" id="IPR003439">
    <property type="entry name" value="ABC_transporter-like_ATP-bd"/>
</dbReference>
<dbReference type="InterPro" id="IPR017871">
    <property type="entry name" value="ABC_transporter-like_CS"/>
</dbReference>
<dbReference type="InterPro" id="IPR045865">
    <property type="entry name" value="ACT-like_dom_sf"/>
</dbReference>
<dbReference type="InterPro" id="IPR041701">
    <property type="entry name" value="MetN_ABC"/>
</dbReference>
<dbReference type="InterPro" id="IPR050086">
    <property type="entry name" value="MetN_ABC_transporter-like"/>
</dbReference>
<dbReference type="InterPro" id="IPR018449">
    <property type="entry name" value="NIL_domain"/>
</dbReference>
<dbReference type="InterPro" id="IPR027417">
    <property type="entry name" value="P-loop_NTPase"/>
</dbReference>
<dbReference type="PANTHER" id="PTHR43166">
    <property type="entry name" value="AMINO ACID IMPORT ATP-BINDING PROTEIN"/>
    <property type="match status" value="1"/>
</dbReference>
<dbReference type="PANTHER" id="PTHR43166:SF36">
    <property type="entry name" value="METHIONINE IMPORT ATP-BINDING PROTEIN METN 2"/>
    <property type="match status" value="1"/>
</dbReference>
<dbReference type="Pfam" id="PF00005">
    <property type="entry name" value="ABC_tran"/>
    <property type="match status" value="1"/>
</dbReference>
<dbReference type="Pfam" id="PF09383">
    <property type="entry name" value="NIL"/>
    <property type="match status" value="1"/>
</dbReference>
<dbReference type="SMART" id="SM00382">
    <property type="entry name" value="AAA"/>
    <property type="match status" value="1"/>
</dbReference>
<dbReference type="SMART" id="SM00930">
    <property type="entry name" value="NIL"/>
    <property type="match status" value="1"/>
</dbReference>
<dbReference type="SUPFAM" id="SSF55021">
    <property type="entry name" value="ACT-like"/>
    <property type="match status" value="1"/>
</dbReference>
<dbReference type="SUPFAM" id="SSF52540">
    <property type="entry name" value="P-loop containing nucleoside triphosphate hydrolases"/>
    <property type="match status" value="1"/>
</dbReference>
<dbReference type="PROSITE" id="PS00211">
    <property type="entry name" value="ABC_TRANSPORTER_1"/>
    <property type="match status" value="1"/>
</dbReference>
<dbReference type="PROSITE" id="PS50893">
    <property type="entry name" value="ABC_TRANSPORTER_2"/>
    <property type="match status" value="1"/>
</dbReference>
<dbReference type="PROSITE" id="PS51264">
    <property type="entry name" value="METN"/>
    <property type="match status" value="1"/>
</dbReference>
<sequence>MIELKEVVKEYRTKNKEVLAVDHVNLSIRAGSIYGVIGFSGAGKSTLIRMFNHLEAPTSGEVIIDGDHIGQLSKNGLRAKRQKVSMIFQHFNLLWSRTVLKNIMFPLEIAGVPRRRAKQKALELVELVGLKGREKAYPSELSGGQKQRVGIARALANDPTVLLCDEATSALDPQTTDEILDLLLKIREQQNLTIILITHEMHVIRRICDEVAVMESGKVIEHGPVTQVFENPQHAVTKRFVKEDLNDDFETSLTELEPLEKDAYIVRLVFAGSTTTEPIVSSLSTAYDIKINILEANIKNTKNGTVGFLVLHIPYISSIDFGKFEKELIERQVKMEVLRHG</sequence>
<comment type="function">
    <text evidence="1">Part of the ABC transporter complex MetNIQ involved in methionine import. Responsible for energy coupling to the transport system.</text>
</comment>
<comment type="catalytic activity">
    <reaction evidence="1">
        <text>L-methionine(out) + ATP + H2O = L-methionine(in) + ADP + phosphate + H(+)</text>
        <dbReference type="Rhea" id="RHEA:29779"/>
        <dbReference type="ChEBI" id="CHEBI:15377"/>
        <dbReference type="ChEBI" id="CHEBI:15378"/>
        <dbReference type="ChEBI" id="CHEBI:30616"/>
        <dbReference type="ChEBI" id="CHEBI:43474"/>
        <dbReference type="ChEBI" id="CHEBI:57844"/>
        <dbReference type="ChEBI" id="CHEBI:456216"/>
        <dbReference type="EC" id="7.4.2.11"/>
    </reaction>
</comment>
<comment type="catalytic activity">
    <reaction evidence="1">
        <text>D-methionine(out) + ATP + H2O = D-methionine(in) + ADP + phosphate + H(+)</text>
        <dbReference type="Rhea" id="RHEA:29767"/>
        <dbReference type="ChEBI" id="CHEBI:15377"/>
        <dbReference type="ChEBI" id="CHEBI:15378"/>
        <dbReference type="ChEBI" id="CHEBI:30616"/>
        <dbReference type="ChEBI" id="CHEBI:43474"/>
        <dbReference type="ChEBI" id="CHEBI:57932"/>
        <dbReference type="ChEBI" id="CHEBI:456216"/>
        <dbReference type="EC" id="7.4.2.11"/>
    </reaction>
</comment>
<comment type="subunit">
    <text evidence="1">The complex is composed of two ATP-binding proteins (MetN), two transmembrane proteins (MetI) and a solute-binding protein (MetQ).</text>
</comment>
<comment type="subcellular location">
    <subcellularLocation>
        <location evidence="1">Cell membrane</location>
        <topology evidence="1">Peripheral membrane protein</topology>
    </subcellularLocation>
</comment>
<comment type="similarity">
    <text evidence="1">Belongs to the ABC transporter superfamily. Methionine importer (TC 3.A.1.24) family.</text>
</comment>
<protein>
    <recommendedName>
        <fullName evidence="1">Methionine import ATP-binding protein MetN 2</fullName>
        <ecNumber evidence="1">7.4.2.11</ecNumber>
    </recommendedName>
</protein>
<accession>Q6GIH9</accession>
<gene>
    <name evidence="1" type="primary">metN2</name>
    <name type="ordered locus">SAR0870</name>
</gene>
<feature type="chain" id="PRO_0000270392" description="Methionine import ATP-binding protein MetN 2">
    <location>
        <begin position="1"/>
        <end position="341"/>
    </location>
</feature>
<feature type="domain" description="ABC transporter" evidence="1">
    <location>
        <begin position="2"/>
        <end position="241"/>
    </location>
</feature>
<feature type="binding site" evidence="1">
    <location>
        <begin position="38"/>
        <end position="45"/>
    </location>
    <ligand>
        <name>ATP</name>
        <dbReference type="ChEBI" id="CHEBI:30616"/>
    </ligand>
</feature>
<reference key="1">
    <citation type="journal article" date="2004" name="Proc. Natl. Acad. Sci. U.S.A.">
        <title>Complete genomes of two clinical Staphylococcus aureus strains: evidence for the rapid evolution of virulence and drug resistance.</title>
        <authorList>
            <person name="Holden M.T.G."/>
            <person name="Feil E.J."/>
            <person name="Lindsay J.A."/>
            <person name="Peacock S.J."/>
            <person name="Day N.P.J."/>
            <person name="Enright M.C."/>
            <person name="Foster T.J."/>
            <person name="Moore C.E."/>
            <person name="Hurst L."/>
            <person name="Atkin R."/>
            <person name="Barron A."/>
            <person name="Bason N."/>
            <person name="Bentley S.D."/>
            <person name="Chillingworth C."/>
            <person name="Chillingworth T."/>
            <person name="Churcher C."/>
            <person name="Clark L."/>
            <person name="Corton C."/>
            <person name="Cronin A."/>
            <person name="Doggett J."/>
            <person name="Dowd L."/>
            <person name="Feltwell T."/>
            <person name="Hance Z."/>
            <person name="Harris B."/>
            <person name="Hauser H."/>
            <person name="Holroyd S."/>
            <person name="Jagels K."/>
            <person name="James K.D."/>
            <person name="Lennard N."/>
            <person name="Line A."/>
            <person name="Mayes R."/>
            <person name="Moule S."/>
            <person name="Mungall K."/>
            <person name="Ormond D."/>
            <person name="Quail M.A."/>
            <person name="Rabbinowitsch E."/>
            <person name="Rutherford K.M."/>
            <person name="Sanders M."/>
            <person name="Sharp S."/>
            <person name="Simmonds M."/>
            <person name="Stevens K."/>
            <person name="Whitehead S."/>
            <person name="Barrell B.G."/>
            <person name="Spratt B.G."/>
            <person name="Parkhill J."/>
        </authorList>
    </citation>
    <scope>NUCLEOTIDE SEQUENCE [LARGE SCALE GENOMIC DNA]</scope>
    <source>
        <strain>MRSA252</strain>
    </source>
</reference>
<proteinExistence type="inferred from homology"/>
<keyword id="KW-0029">Amino-acid transport</keyword>
<keyword id="KW-0067">ATP-binding</keyword>
<keyword id="KW-1003">Cell membrane</keyword>
<keyword id="KW-0472">Membrane</keyword>
<keyword id="KW-0547">Nucleotide-binding</keyword>
<keyword id="KW-1278">Translocase</keyword>
<keyword id="KW-0813">Transport</keyword>